<reference key="1">
    <citation type="journal article" date="2008" name="Genome Biol.">
        <title>The complete genome, comparative and functional analysis of Stenotrophomonas maltophilia reveals an organism heavily shielded by drug resistance determinants.</title>
        <authorList>
            <person name="Crossman L.C."/>
            <person name="Gould V.C."/>
            <person name="Dow J.M."/>
            <person name="Vernikos G.S."/>
            <person name="Okazaki A."/>
            <person name="Sebaihia M."/>
            <person name="Saunders D."/>
            <person name="Arrowsmith C."/>
            <person name="Carver T."/>
            <person name="Peters N."/>
            <person name="Adlem E."/>
            <person name="Kerhornou A."/>
            <person name="Lord A."/>
            <person name="Murphy L."/>
            <person name="Seeger K."/>
            <person name="Squares R."/>
            <person name="Rutter S."/>
            <person name="Quail M.A."/>
            <person name="Rajandream M.A."/>
            <person name="Harris D."/>
            <person name="Churcher C."/>
            <person name="Bentley S.D."/>
            <person name="Parkhill J."/>
            <person name="Thomson N.R."/>
            <person name="Avison M.B."/>
        </authorList>
    </citation>
    <scope>NUCLEOTIDE SEQUENCE [LARGE SCALE GENOMIC DNA]</scope>
    <source>
        <strain>K279a</strain>
    </source>
</reference>
<comment type="function">
    <text evidence="1">Single strand-specific metallo-endoribonuclease involved in late-stage 70S ribosome quality control and in maturation of the 3' terminus of the 16S rRNA.</text>
</comment>
<comment type="cofactor">
    <cofactor evidence="1">
        <name>Zn(2+)</name>
        <dbReference type="ChEBI" id="CHEBI:29105"/>
    </cofactor>
    <text evidence="1">Binds 1 zinc ion.</text>
</comment>
<comment type="subcellular location">
    <subcellularLocation>
        <location evidence="1">Cytoplasm</location>
    </subcellularLocation>
</comment>
<comment type="similarity">
    <text evidence="1">Belongs to the endoribonuclease YbeY family.</text>
</comment>
<keyword id="KW-0963">Cytoplasm</keyword>
<keyword id="KW-0255">Endonuclease</keyword>
<keyword id="KW-0378">Hydrolase</keyword>
<keyword id="KW-0479">Metal-binding</keyword>
<keyword id="KW-0540">Nuclease</keyword>
<keyword id="KW-1185">Reference proteome</keyword>
<keyword id="KW-0690">Ribosome biogenesis</keyword>
<keyword id="KW-0698">rRNA processing</keyword>
<keyword id="KW-0862">Zinc</keyword>
<gene>
    <name evidence="1" type="primary">ybeY</name>
    <name type="ordered locus">Smlt1595</name>
</gene>
<organism>
    <name type="scientific">Stenotrophomonas maltophilia (strain K279a)</name>
    <dbReference type="NCBI Taxonomy" id="522373"/>
    <lineage>
        <taxon>Bacteria</taxon>
        <taxon>Pseudomonadati</taxon>
        <taxon>Pseudomonadota</taxon>
        <taxon>Gammaproteobacteria</taxon>
        <taxon>Lysobacterales</taxon>
        <taxon>Lysobacteraceae</taxon>
        <taxon>Stenotrophomonas</taxon>
        <taxon>Stenotrophomonas maltophilia group</taxon>
    </lineage>
</organism>
<name>YBEY_STRMK</name>
<accession>B2FJ87</accession>
<proteinExistence type="inferred from homology"/>
<feature type="chain" id="PRO_1000089214" description="Endoribonuclease YbeY">
    <location>
        <begin position="1"/>
        <end position="161"/>
    </location>
</feature>
<feature type="binding site" evidence="1">
    <location>
        <position position="121"/>
    </location>
    <ligand>
        <name>Zn(2+)</name>
        <dbReference type="ChEBI" id="CHEBI:29105"/>
        <note>catalytic</note>
    </ligand>
</feature>
<feature type="binding site" evidence="1">
    <location>
        <position position="125"/>
    </location>
    <ligand>
        <name>Zn(2+)</name>
        <dbReference type="ChEBI" id="CHEBI:29105"/>
        <note>catalytic</note>
    </ligand>
</feature>
<feature type="binding site" evidence="1">
    <location>
        <position position="131"/>
    </location>
    <ligand>
        <name>Zn(2+)</name>
        <dbReference type="ChEBI" id="CHEBI:29105"/>
        <note>catalytic</note>
    </ligand>
</feature>
<protein>
    <recommendedName>
        <fullName evidence="1">Endoribonuclease YbeY</fullName>
        <ecNumber evidence="1">3.1.-.-</ecNumber>
    </recommendedName>
</protein>
<dbReference type="EC" id="3.1.-.-" evidence="1"/>
<dbReference type="EMBL" id="AM743169">
    <property type="protein sequence ID" value="CAQ45126.1"/>
    <property type="molecule type" value="Genomic_DNA"/>
</dbReference>
<dbReference type="RefSeq" id="WP_012479661.1">
    <property type="nucleotide sequence ID" value="NC_010943.1"/>
</dbReference>
<dbReference type="SMR" id="B2FJ87"/>
<dbReference type="EnsemblBacteria" id="CAQ45126">
    <property type="protein sequence ID" value="CAQ45126"/>
    <property type="gene ID" value="Smlt1595"/>
</dbReference>
<dbReference type="KEGG" id="sml:Smlt1595"/>
<dbReference type="PATRIC" id="fig|522373.3.peg.1529"/>
<dbReference type="eggNOG" id="COG0319">
    <property type="taxonomic scope" value="Bacteria"/>
</dbReference>
<dbReference type="HOGENOM" id="CLU_106710_0_1_6"/>
<dbReference type="Proteomes" id="UP000008840">
    <property type="component" value="Chromosome"/>
</dbReference>
<dbReference type="GO" id="GO:0005737">
    <property type="term" value="C:cytoplasm"/>
    <property type="evidence" value="ECO:0007669"/>
    <property type="project" value="UniProtKB-SubCell"/>
</dbReference>
<dbReference type="GO" id="GO:0004222">
    <property type="term" value="F:metalloendopeptidase activity"/>
    <property type="evidence" value="ECO:0007669"/>
    <property type="project" value="InterPro"/>
</dbReference>
<dbReference type="GO" id="GO:0004521">
    <property type="term" value="F:RNA endonuclease activity"/>
    <property type="evidence" value="ECO:0007669"/>
    <property type="project" value="UniProtKB-UniRule"/>
</dbReference>
<dbReference type="GO" id="GO:0008270">
    <property type="term" value="F:zinc ion binding"/>
    <property type="evidence" value="ECO:0007669"/>
    <property type="project" value="UniProtKB-UniRule"/>
</dbReference>
<dbReference type="GO" id="GO:0006364">
    <property type="term" value="P:rRNA processing"/>
    <property type="evidence" value="ECO:0007669"/>
    <property type="project" value="UniProtKB-UniRule"/>
</dbReference>
<dbReference type="Gene3D" id="3.40.390.30">
    <property type="entry name" value="Metalloproteases ('zincins'), catalytic domain"/>
    <property type="match status" value="1"/>
</dbReference>
<dbReference type="HAMAP" id="MF_00009">
    <property type="entry name" value="Endoribonucl_YbeY"/>
    <property type="match status" value="1"/>
</dbReference>
<dbReference type="InterPro" id="IPR023091">
    <property type="entry name" value="MetalPrtase_cat_dom_sf_prd"/>
</dbReference>
<dbReference type="InterPro" id="IPR002036">
    <property type="entry name" value="YbeY"/>
</dbReference>
<dbReference type="InterPro" id="IPR020549">
    <property type="entry name" value="YbeY_CS"/>
</dbReference>
<dbReference type="NCBIfam" id="TIGR00043">
    <property type="entry name" value="rRNA maturation RNase YbeY"/>
    <property type="match status" value="1"/>
</dbReference>
<dbReference type="PANTHER" id="PTHR46986">
    <property type="entry name" value="ENDORIBONUCLEASE YBEY, CHLOROPLASTIC"/>
    <property type="match status" value="1"/>
</dbReference>
<dbReference type="PANTHER" id="PTHR46986:SF1">
    <property type="entry name" value="ENDORIBONUCLEASE YBEY, CHLOROPLASTIC"/>
    <property type="match status" value="1"/>
</dbReference>
<dbReference type="Pfam" id="PF02130">
    <property type="entry name" value="YbeY"/>
    <property type="match status" value="1"/>
</dbReference>
<dbReference type="SUPFAM" id="SSF55486">
    <property type="entry name" value="Metalloproteases ('zincins'), catalytic domain"/>
    <property type="match status" value="1"/>
</dbReference>
<dbReference type="PROSITE" id="PS01306">
    <property type="entry name" value="UPF0054"/>
    <property type="match status" value="1"/>
</dbReference>
<evidence type="ECO:0000255" key="1">
    <source>
        <dbReference type="HAMAP-Rule" id="MF_00009"/>
    </source>
</evidence>
<sequence>MTRGPVRLDVAISYALPRAGLPAAVSFRRWVAAALKGRIREADLAIRVVDAKEGQSLNRHYRGKDYATNVLSFPAEVPEGLPKGVKFPLLGDLVICAPVVAREADEQGKALNAHYAHLTVHGVLHLLGWDHEDDKEAEAMEQLEREILAELGIDDPYAGER</sequence>